<sequence>MASPLKILISNDDGVFAEGIKALAHEAARRGHSVTVVCPDQERSATGHGLTLQSPIRAEQADGLFADGIRAWACTGTPSDCVKLALGKLLEAPPDLVLSGINHGPNLGSDVIYSGTVAAAMEGTLEGLPALAVSSACFDWRQFDGAAVQAMDVAESALAGGWPEGLLLNLNVPAVPPDRIGPVRWCRPGVRRYVDQFDERFDPRGRSYYWLAGEVVNDFEAAGTGPKDWPTDVAQVQGGGVALTPLQPELFWRGALPPLPIAGVSAAPDAAAARG</sequence>
<name>SURE_SYNR3</name>
<proteinExistence type="inferred from homology"/>
<reference key="1">
    <citation type="submission" date="2006-05" db="EMBL/GenBank/DDBJ databases">
        <authorList>
            <consortium name="Genoscope"/>
        </authorList>
    </citation>
    <scope>NUCLEOTIDE SEQUENCE [LARGE SCALE GENOMIC DNA]</scope>
    <source>
        <strain>RCC307</strain>
    </source>
</reference>
<keyword id="KW-0963">Cytoplasm</keyword>
<keyword id="KW-0378">Hydrolase</keyword>
<keyword id="KW-0479">Metal-binding</keyword>
<keyword id="KW-0547">Nucleotide-binding</keyword>
<keyword id="KW-1185">Reference proteome</keyword>
<dbReference type="EC" id="3.1.3.5" evidence="1"/>
<dbReference type="EMBL" id="CT978603">
    <property type="protein sequence ID" value="CAK28643.1"/>
    <property type="molecule type" value="Genomic_DNA"/>
</dbReference>
<dbReference type="SMR" id="A5GUT4"/>
<dbReference type="STRING" id="316278.SynRCC307_1740"/>
<dbReference type="KEGG" id="syr:SynRCC307_1740"/>
<dbReference type="eggNOG" id="COG0496">
    <property type="taxonomic scope" value="Bacteria"/>
</dbReference>
<dbReference type="HOGENOM" id="CLU_045192_1_3_3"/>
<dbReference type="OrthoDB" id="9780815at2"/>
<dbReference type="Proteomes" id="UP000001115">
    <property type="component" value="Chromosome"/>
</dbReference>
<dbReference type="GO" id="GO:0005737">
    <property type="term" value="C:cytoplasm"/>
    <property type="evidence" value="ECO:0007669"/>
    <property type="project" value="UniProtKB-SubCell"/>
</dbReference>
<dbReference type="GO" id="GO:0008254">
    <property type="term" value="F:3'-nucleotidase activity"/>
    <property type="evidence" value="ECO:0007669"/>
    <property type="project" value="TreeGrafter"/>
</dbReference>
<dbReference type="GO" id="GO:0008253">
    <property type="term" value="F:5'-nucleotidase activity"/>
    <property type="evidence" value="ECO:0007669"/>
    <property type="project" value="UniProtKB-UniRule"/>
</dbReference>
<dbReference type="GO" id="GO:0004309">
    <property type="term" value="F:exopolyphosphatase activity"/>
    <property type="evidence" value="ECO:0007669"/>
    <property type="project" value="TreeGrafter"/>
</dbReference>
<dbReference type="GO" id="GO:0046872">
    <property type="term" value="F:metal ion binding"/>
    <property type="evidence" value="ECO:0007669"/>
    <property type="project" value="UniProtKB-UniRule"/>
</dbReference>
<dbReference type="GO" id="GO:0000166">
    <property type="term" value="F:nucleotide binding"/>
    <property type="evidence" value="ECO:0007669"/>
    <property type="project" value="UniProtKB-KW"/>
</dbReference>
<dbReference type="Gene3D" id="3.40.1210.10">
    <property type="entry name" value="Survival protein SurE-like phosphatase/nucleotidase"/>
    <property type="match status" value="1"/>
</dbReference>
<dbReference type="HAMAP" id="MF_00060">
    <property type="entry name" value="SurE"/>
    <property type="match status" value="1"/>
</dbReference>
<dbReference type="InterPro" id="IPR030048">
    <property type="entry name" value="SurE"/>
</dbReference>
<dbReference type="InterPro" id="IPR002828">
    <property type="entry name" value="SurE-like_Pase/nucleotidase"/>
</dbReference>
<dbReference type="InterPro" id="IPR036523">
    <property type="entry name" value="SurE-like_sf"/>
</dbReference>
<dbReference type="NCBIfam" id="NF001490">
    <property type="entry name" value="PRK00346.1-4"/>
    <property type="match status" value="1"/>
</dbReference>
<dbReference type="NCBIfam" id="NF001492">
    <property type="entry name" value="PRK00346.2-2"/>
    <property type="match status" value="1"/>
</dbReference>
<dbReference type="NCBIfam" id="TIGR00087">
    <property type="entry name" value="surE"/>
    <property type="match status" value="1"/>
</dbReference>
<dbReference type="PANTHER" id="PTHR30457">
    <property type="entry name" value="5'-NUCLEOTIDASE SURE"/>
    <property type="match status" value="1"/>
</dbReference>
<dbReference type="PANTHER" id="PTHR30457:SF12">
    <property type="entry name" value="5'_3'-NUCLEOTIDASE SURE"/>
    <property type="match status" value="1"/>
</dbReference>
<dbReference type="Pfam" id="PF01975">
    <property type="entry name" value="SurE"/>
    <property type="match status" value="1"/>
</dbReference>
<dbReference type="SUPFAM" id="SSF64167">
    <property type="entry name" value="SurE-like"/>
    <property type="match status" value="1"/>
</dbReference>
<feature type="chain" id="PRO_0000335287" description="5'-nucleotidase SurE">
    <location>
        <begin position="1"/>
        <end position="275"/>
    </location>
</feature>
<feature type="binding site" evidence="1">
    <location>
        <position position="12"/>
    </location>
    <ligand>
        <name>a divalent metal cation</name>
        <dbReference type="ChEBI" id="CHEBI:60240"/>
    </ligand>
</feature>
<feature type="binding site" evidence="1">
    <location>
        <position position="13"/>
    </location>
    <ligand>
        <name>a divalent metal cation</name>
        <dbReference type="ChEBI" id="CHEBI:60240"/>
    </ligand>
</feature>
<feature type="binding site" evidence="1">
    <location>
        <position position="44"/>
    </location>
    <ligand>
        <name>a divalent metal cation</name>
        <dbReference type="ChEBI" id="CHEBI:60240"/>
    </ligand>
</feature>
<feature type="binding site" evidence="1">
    <location>
        <position position="102"/>
    </location>
    <ligand>
        <name>a divalent metal cation</name>
        <dbReference type="ChEBI" id="CHEBI:60240"/>
    </ligand>
</feature>
<comment type="function">
    <text evidence="1">Nucleotidase that shows phosphatase activity on nucleoside 5'-monophosphates.</text>
</comment>
<comment type="catalytic activity">
    <reaction evidence="1">
        <text>a ribonucleoside 5'-phosphate + H2O = a ribonucleoside + phosphate</text>
        <dbReference type="Rhea" id="RHEA:12484"/>
        <dbReference type="ChEBI" id="CHEBI:15377"/>
        <dbReference type="ChEBI" id="CHEBI:18254"/>
        <dbReference type="ChEBI" id="CHEBI:43474"/>
        <dbReference type="ChEBI" id="CHEBI:58043"/>
        <dbReference type="EC" id="3.1.3.5"/>
    </reaction>
</comment>
<comment type="cofactor">
    <cofactor evidence="1">
        <name>a divalent metal cation</name>
        <dbReference type="ChEBI" id="CHEBI:60240"/>
    </cofactor>
    <text evidence="1">Binds 1 divalent metal cation per subunit.</text>
</comment>
<comment type="subcellular location">
    <subcellularLocation>
        <location evidence="1">Cytoplasm</location>
    </subcellularLocation>
</comment>
<comment type="similarity">
    <text evidence="1">Belongs to the SurE nucleotidase family.</text>
</comment>
<evidence type="ECO:0000255" key="1">
    <source>
        <dbReference type="HAMAP-Rule" id="MF_00060"/>
    </source>
</evidence>
<protein>
    <recommendedName>
        <fullName evidence="1">5'-nucleotidase SurE</fullName>
        <ecNumber evidence="1">3.1.3.5</ecNumber>
    </recommendedName>
    <alternativeName>
        <fullName evidence="1">Nucleoside 5'-monophosphate phosphohydrolase</fullName>
    </alternativeName>
</protein>
<accession>A5GUT4</accession>
<organism>
    <name type="scientific">Synechococcus sp. (strain RCC307)</name>
    <dbReference type="NCBI Taxonomy" id="316278"/>
    <lineage>
        <taxon>Bacteria</taxon>
        <taxon>Bacillati</taxon>
        <taxon>Cyanobacteriota</taxon>
        <taxon>Cyanophyceae</taxon>
        <taxon>Synechococcales</taxon>
        <taxon>Synechococcaceae</taxon>
        <taxon>Synechococcus</taxon>
    </lineage>
</organism>
<gene>
    <name evidence="1" type="primary">surE</name>
    <name type="ordered locus">SynRCC307_1740</name>
</gene>